<reference key="1">
    <citation type="journal article" date="2007" name="PLoS Genet.">
        <title>A tale of two oxidation states: bacterial colonization of arsenic-rich environments.</title>
        <authorList>
            <person name="Muller D."/>
            <person name="Medigue C."/>
            <person name="Koechler S."/>
            <person name="Barbe V."/>
            <person name="Barakat M."/>
            <person name="Talla E."/>
            <person name="Bonnefoy V."/>
            <person name="Krin E."/>
            <person name="Arsene-Ploetze F."/>
            <person name="Carapito C."/>
            <person name="Chandler M."/>
            <person name="Cournoyer B."/>
            <person name="Cruveiller S."/>
            <person name="Dossat C."/>
            <person name="Duval S."/>
            <person name="Heymann M."/>
            <person name="Leize E."/>
            <person name="Lieutaud A."/>
            <person name="Lievremont D."/>
            <person name="Makita Y."/>
            <person name="Mangenot S."/>
            <person name="Nitschke W."/>
            <person name="Ortet P."/>
            <person name="Perdrial N."/>
            <person name="Schoepp B."/>
            <person name="Siguier P."/>
            <person name="Simeonova D.D."/>
            <person name="Rouy Z."/>
            <person name="Segurens B."/>
            <person name="Turlin E."/>
            <person name="Vallenet D."/>
            <person name="van Dorsselaer A."/>
            <person name="Weiss S."/>
            <person name="Weissenbach J."/>
            <person name="Lett M.-C."/>
            <person name="Danchin A."/>
            <person name="Bertin P.N."/>
        </authorList>
    </citation>
    <scope>NUCLEOTIDE SEQUENCE [LARGE SCALE GENOMIC DNA]</scope>
    <source>
        <strain>ULPAs1</strain>
    </source>
</reference>
<comment type="function">
    <text evidence="1">Catalyzes the attachment of alanine to tRNA(Ala) in a two-step reaction: alanine is first activated by ATP to form Ala-AMP and then transferred to the acceptor end of tRNA(Ala). Also edits incorrectly charged Ser-tRNA(Ala) and Gly-tRNA(Ala) via its editing domain.</text>
</comment>
<comment type="catalytic activity">
    <reaction evidence="1">
        <text>tRNA(Ala) + L-alanine + ATP = L-alanyl-tRNA(Ala) + AMP + diphosphate</text>
        <dbReference type="Rhea" id="RHEA:12540"/>
        <dbReference type="Rhea" id="RHEA-COMP:9657"/>
        <dbReference type="Rhea" id="RHEA-COMP:9923"/>
        <dbReference type="ChEBI" id="CHEBI:30616"/>
        <dbReference type="ChEBI" id="CHEBI:33019"/>
        <dbReference type="ChEBI" id="CHEBI:57972"/>
        <dbReference type="ChEBI" id="CHEBI:78442"/>
        <dbReference type="ChEBI" id="CHEBI:78497"/>
        <dbReference type="ChEBI" id="CHEBI:456215"/>
        <dbReference type="EC" id="6.1.1.7"/>
    </reaction>
</comment>
<comment type="cofactor">
    <cofactor evidence="1">
        <name>Zn(2+)</name>
        <dbReference type="ChEBI" id="CHEBI:29105"/>
    </cofactor>
    <text evidence="1">Binds 1 zinc ion per subunit.</text>
</comment>
<comment type="subcellular location">
    <subcellularLocation>
        <location evidence="1">Cytoplasm</location>
    </subcellularLocation>
</comment>
<comment type="domain">
    <text evidence="1">Consists of three domains; the N-terminal catalytic domain, the editing domain and the C-terminal C-Ala domain. The editing domain removes incorrectly charged amino acids, while the C-Ala domain, along with tRNA(Ala), serves as a bridge to cooperatively bring together the editing and aminoacylation centers thus stimulating deacylation of misacylated tRNAs.</text>
</comment>
<comment type="similarity">
    <text evidence="1">Belongs to the class-II aminoacyl-tRNA synthetase family.</text>
</comment>
<proteinExistence type="inferred from homology"/>
<organism>
    <name type="scientific">Herminiimonas arsenicoxydans</name>
    <dbReference type="NCBI Taxonomy" id="204773"/>
    <lineage>
        <taxon>Bacteria</taxon>
        <taxon>Pseudomonadati</taxon>
        <taxon>Pseudomonadota</taxon>
        <taxon>Betaproteobacteria</taxon>
        <taxon>Burkholderiales</taxon>
        <taxon>Oxalobacteraceae</taxon>
        <taxon>Herminiimonas</taxon>
    </lineage>
</organism>
<dbReference type="EC" id="6.1.1.7" evidence="1"/>
<dbReference type="EMBL" id="CU207211">
    <property type="protein sequence ID" value="CAL60816.1"/>
    <property type="molecule type" value="Genomic_DNA"/>
</dbReference>
<dbReference type="SMR" id="A4G2S9"/>
<dbReference type="STRING" id="204773.HEAR0616"/>
<dbReference type="KEGG" id="har:HEAR0616"/>
<dbReference type="eggNOG" id="COG0013">
    <property type="taxonomic scope" value="Bacteria"/>
</dbReference>
<dbReference type="HOGENOM" id="CLU_004485_1_1_4"/>
<dbReference type="OrthoDB" id="9803884at2"/>
<dbReference type="Proteomes" id="UP000006697">
    <property type="component" value="Chromosome"/>
</dbReference>
<dbReference type="GO" id="GO:0005829">
    <property type="term" value="C:cytosol"/>
    <property type="evidence" value="ECO:0007669"/>
    <property type="project" value="TreeGrafter"/>
</dbReference>
<dbReference type="GO" id="GO:0004813">
    <property type="term" value="F:alanine-tRNA ligase activity"/>
    <property type="evidence" value="ECO:0007669"/>
    <property type="project" value="UniProtKB-UniRule"/>
</dbReference>
<dbReference type="GO" id="GO:0002161">
    <property type="term" value="F:aminoacyl-tRNA deacylase activity"/>
    <property type="evidence" value="ECO:0007669"/>
    <property type="project" value="TreeGrafter"/>
</dbReference>
<dbReference type="GO" id="GO:0005524">
    <property type="term" value="F:ATP binding"/>
    <property type="evidence" value="ECO:0007669"/>
    <property type="project" value="UniProtKB-UniRule"/>
</dbReference>
<dbReference type="GO" id="GO:0000049">
    <property type="term" value="F:tRNA binding"/>
    <property type="evidence" value="ECO:0007669"/>
    <property type="project" value="UniProtKB-KW"/>
</dbReference>
<dbReference type="GO" id="GO:0008270">
    <property type="term" value="F:zinc ion binding"/>
    <property type="evidence" value="ECO:0007669"/>
    <property type="project" value="UniProtKB-UniRule"/>
</dbReference>
<dbReference type="GO" id="GO:0006419">
    <property type="term" value="P:alanyl-tRNA aminoacylation"/>
    <property type="evidence" value="ECO:0007669"/>
    <property type="project" value="UniProtKB-UniRule"/>
</dbReference>
<dbReference type="GO" id="GO:0045892">
    <property type="term" value="P:negative regulation of DNA-templated transcription"/>
    <property type="evidence" value="ECO:0007669"/>
    <property type="project" value="TreeGrafter"/>
</dbReference>
<dbReference type="CDD" id="cd00673">
    <property type="entry name" value="AlaRS_core"/>
    <property type="match status" value="1"/>
</dbReference>
<dbReference type="FunFam" id="2.40.30.130:FF:000001">
    <property type="entry name" value="Alanine--tRNA ligase"/>
    <property type="match status" value="1"/>
</dbReference>
<dbReference type="FunFam" id="3.10.310.40:FF:000001">
    <property type="entry name" value="Alanine--tRNA ligase"/>
    <property type="match status" value="1"/>
</dbReference>
<dbReference type="FunFam" id="3.30.54.20:FF:000001">
    <property type="entry name" value="Alanine--tRNA ligase"/>
    <property type="match status" value="1"/>
</dbReference>
<dbReference type="FunFam" id="3.30.930.10:FF:000004">
    <property type="entry name" value="Alanine--tRNA ligase"/>
    <property type="match status" value="1"/>
</dbReference>
<dbReference type="FunFam" id="3.30.980.10:FF:000004">
    <property type="entry name" value="Alanine--tRNA ligase, cytoplasmic"/>
    <property type="match status" value="1"/>
</dbReference>
<dbReference type="Gene3D" id="2.40.30.130">
    <property type="match status" value="1"/>
</dbReference>
<dbReference type="Gene3D" id="3.10.310.40">
    <property type="match status" value="1"/>
</dbReference>
<dbReference type="Gene3D" id="3.30.54.20">
    <property type="match status" value="1"/>
</dbReference>
<dbReference type="Gene3D" id="6.10.250.550">
    <property type="match status" value="1"/>
</dbReference>
<dbReference type="Gene3D" id="3.30.930.10">
    <property type="entry name" value="Bira Bifunctional Protein, Domain 2"/>
    <property type="match status" value="1"/>
</dbReference>
<dbReference type="Gene3D" id="3.30.980.10">
    <property type="entry name" value="Threonyl-trna Synthetase, Chain A, domain 2"/>
    <property type="match status" value="1"/>
</dbReference>
<dbReference type="HAMAP" id="MF_00036_B">
    <property type="entry name" value="Ala_tRNA_synth_B"/>
    <property type="match status" value="1"/>
</dbReference>
<dbReference type="InterPro" id="IPR045864">
    <property type="entry name" value="aa-tRNA-synth_II/BPL/LPL"/>
</dbReference>
<dbReference type="InterPro" id="IPR002318">
    <property type="entry name" value="Ala-tRNA-lgiase_IIc"/>
</dbReference>
<dbReference type="InterPro" id="IPR018162">
    <property type="entry name" value="Ala-tRNA-ligase_IIc_anticod-bd"/>
</dbReference>
<dbReference type="InterPro" id="IPR018165">
    <property type="entry name" value="Ala-tRNA-synth_IIc_core"/>
</dbReference>
<dbReference type="InterPro" id="IPR018164">
    <property type="entry name" value="Ala-tRNA-synth_IIc_N"/>
</dbReference>
<dbReference type="InterPro" id="IPR050058">
    <property type="entry name" value="Ala-tRNA_ligase"/>
</dbReference>
<dbReference type="InterPro" id="IPR023033">
    <property type="entry name" value="Ala_tRNA_ligase_euk/bac"/>
</dbReference>
<dbReference type="InterPro" id="IPR003156">
    <property type="entry name" value="DHHA1_dom"/>
</dbReference>
<dbReference type="InterPro" id="IPR018163">
    <property type="entry name" value="Thr/Ala-tRNA-synth_IIc_edit"/>
</dbReference>
<dbReference type="InterPro" id="IPR009000">
    <property type="entry name" value="Transl_B-barrel_sf"/>
</dbReference>
<dbReference type="InterPro" id="IPR012947">
    <property type="entry name" value="tRNA_SAD"/>
</dbReference>
<dbReference type="NCBIfam" id="TIGR00344">
    <property type="entry name" value="alaS"/>
    <property type="match status" value="1"/>
</dbReference>
<dbReference type="PANTHER" id="PTHR11777:SF9">
    <property type="entry name" value="ALANINE--TRNA LIGASE, CYTOPLASMIC"/>
    <property type="match status" value="1"/>
</dbReference>
<dbReference type="PANTHER" id="PTHR11777">
    <property type="entry name" value="ALANYL-TRNA SYNTHETASE"/>
    <property type="match status" value="1"/>
</dbReference>
<dbReference type="Pfam" id="PF02272">
    <property type="entry name" value="DHHA1"/>
    <property type="match status" value="1"/>
</dbReference>
<dbReference type="Pfam" id="PF01411">
    <property type="entry name" value="tRNA-synt_2c"/>
    <property type="match status" value="1"/>
</dbReference>
<dbReference type="Pfam" id="PF07973">
    <property type="entry name" value="tRNA_SAD"/>
    <property type="match status" value="1"/>
</dbReference>
<dbReference type="PRINTS" id="PR00980">
    <property type="entry name" value="TRNASYNTHALA"/>
</dbReference>
<dbReference type="SMART" id="SM00863">
    <property type="entry name" value="tRNA_SAD"/>
    <property type="match status" value="1"/>
</dbReference>
<dbReference type="SUPFAM" id="SSF55681">
    <property type="entry name" value="Class II aaRS and biotin synthetases"/>
    <property type="match status" value="1"/>
</dbReference>
<dbReference type="SUPFAM" id="SSF101353">
    <property type="entry name" value="Putative anticodon-binding domain of alanyl-tRNA synthetase (AlaRS)"/>
    <property type="match status" value="1"/>
</dbReference>
<dbReference type="SUPFAM" id="SSF55186">
    <property type="entry name" value="ThrRS/AlaRS common domain"/>
    <property type="match status" value="1"/>
</dbReference>
<dbReference type="SUPFAM" id="SSF50447">
    <property type="entry name" value="Translation proteins"/>
    <property type="match status" value="1"/>
</dbReference>
<dbReference type="PROSITE" id="PS50860">
    <property type="entry name" value="AA_TRNA_LIGASE_II_ALA"/>
    <property type="match status" value="1"/>
</dbReference>
<keyword id="KW-0030">Aminoacyl-tRNA synthetase</keyword>
<keyword id="KW-0067">ATP-binding</keyword>
<keyword id="KW-0963">Cytoplasm</keyword>
<keyword id="KW-0436">Ligase</keyword>
<keyword id="KW-0479">Metal-binding</keyword>
<keyword id="KW-0547">Nucleotide-binding</keyword>
<keyword id="KW-0648">Protein biosynthesis</keyword>
<keyword id="KW-1185">Reference proteome</keyword>
<keyword id="KW-0694">RNA-binding</keyword>
<keyword id="KW-0820">tRNA-binding</keyword>
<keyword id="KW-0862">Zinc</keyword>
<name>SYA_HERAR</name>
<evidence type="ECO:0000255" key="1">
    <source>
        <dbReference type="HAMAP-Rule" id="MF_00036"/>
    </source>
</evidence>
<gene>
    <name evidence="1" type="primary">alaS</name>
    <name type="ordered locus">HEAR0616</name>
</gene>
<accession>A4G2S9</accession>
<feature type="chain" id="PRO_0000347635" description="Alanine--tRNA ligase">
    <location>
        <begin position="1"/>
        <end position="869"/>
    </location>
</feature>
<feature type="binding site" evidence="1">
    <location>
        <position position="559"/>
    </location>
    <ligand>
        <name>Zn(2+)</name>
        <dbReference type="ChEBI" id="CHEBI:29105"/>
    </ligand>
</feature>
<feature type="binding site" evidence="1">
    <location>
        <position position="563"/>
    </location>
    <ligand>
        <name>Zn(2+)</name>
        <dbReference type="ChEBI" id="CHEBI:29105"/>
    </ligand>
</feature>
<feature type="binding site" evidence="1">
    <location>
        <position position="660"/>
    </location>
    <ligand>
        <name>Zn(2+)</name>
        <dbReference type="ChEBI" id="CHEBI:29105"/>
    </ligand>
</feature>
<feature type="binding site" evidence="1">
    <location>
        <position position="664"/>
    </location>
    <ligand>
        <name>Zn(2+)</name>
        <dbReference type="ChEBI" id="CHEBI:29105"/>
    </ligand>
</feature>
<sequence>MKSSEIREKFLKFFESKGHTIVASSPLVPGNDPTLMFTNSGMVQFKDVFLGEDKRPYVRATSVQACLRAGGKHNDLENVGYTARHHTFFEMLGNWSFGDYFKRDALMWSWELLTKVYGLPGDKLLATVYIEDQEAYDIWTKEIGLPPERVIRIGDNKGGRYKSDNFWMMADTGPCGPCSEIFYDHGPHIAGGPPGSPDEDGDRYIEIWNNVFMQFDMAEDGTVKPLPAPCVDTGMGLERLAAILQGVHSNYEIDTFAALIKAAGRETNTKDLTNNSLKVIADHIRATAFLVADGVIPSNEGRGYVQRRIIRRAIRHGYKLGQKKPFFHKLVKDLVEQMGEAYPKLQADAQRITEVLKAEEERFFETLANGMEILDAALAGGVKVLPGEVAFKLHDTFGFPLDLSADVCREAGVSVDEAGFAAAMEKQKAAGRAAGKFKMERAVEYTGAGNVFTGYENLQEDATVVGLYFEGTAVQQLKEGQAGIVVLDTTPFYAESGGQVGDQGFVSAEGVQFGVEDTQKIKADVYGHHGVQTQGTLKVGDKVQAAVDGARRAATMRNHSVTHIMHKALREVLGEHVQQKGSLVDAEKTRFDFAHNAPVTHEQILEIEKRVNAEILANSDTQARVMDIESAQKTGAMMLFGEKYGETVRVLDIGSSRELCGGTHVSRTGDIGLFKVVGESGVAAGVRRIEAITGANALSYFQDLEATVHSAAATLKSPPAELQPRLAQVLDQVKTLEREINALKGKLASSQGDELLSQAVEIKGIKVLAAKLENADAGTLRTTMDTLKDKLKTAAIVLAAVNDGKVSLIAGVTADATGKVKAGELVNFVAQQVGGKGGGRADMAQAGGTDASGLPAALQGVAAWVAERA</sequence>
<protein>
    <recommendedName>
        <fullName evidence="1">Alanine--tRNA ligase</fullName>
        <ecNumber evidence="1">6.1.1.7</ecNumber>
    </recommendedName>
    <alternativeName>
        <fullName evidence="1">Alanyl-tRNA synthetase</fullName>
        <shortName evidence="1">AlaRS</shortName>
    </alternativeName>
</protein>